<protein>
    <recommendedName>
        <fullName>HPr kinase/phosphorylase</fullName>
        <shortName>HPrK/P</shortName>
        <ecNumber>2.7.11.-</ecNumber>
        <ecNumber>2.7.4.-</ecNumber>
    </recommendedName>
    <alternativeName>
        <fullName>HPr kinase/phosphatase</fullName>
    </alternativeName>
    <alternativeName>
        <fullName>HPr(Ser) kinase/phosphorylase</fullName>
    </alternativeName>
</protein>
<gene>
    <name type="primary">hprK</name>
    <name type="synonym">ptsK</name>
    <name type="ordered locus">MPN_223</name>
    <name type="ORF">MP608</name>
</gene>
<evidence type="ECO:0000250" key="1"/>
<evidence type="ECO:0000255" key="2"/>
<evidence type="ECO:0000269" key="3">
    <source>
    </source>
</evidence>
<evidence type="ECO:0000269" key="4">
    <source>
    </source>
</evidence>
<evidence type="ECO:0000305" key="5"/>
<evidence type="ECO:0007829" key="6">
    <source>
        <dbReference type="PDB" id="1KNX"/>
    </source>
</evidence>
<comment type="function">
    <text>Is a metabolite-sensitive enzyme that catalyzes the ATP-as well as probably the pyrophosphate-dependent phosphorylation of Ser-47 in HPr, a phosphocarrier protein of the phosphoenolpyruvate-dependent sugar phosphotransferase system (PTS). HprK/P also catalyzes the pyrophosphate-producing, inorganic phosphate-dependent dephosphorylation (phosphorolysis) of seryl-phosphorylated HPr (P-Ser-HPr). The regulatory role of HPrK/P in the physiology of M.pneumoniae is not known yet.</text>
</comment>
<comment type="catalytic activity">
    <reaction>
        <text>[HPr protein]-L-serine + ATP = [HPr protein]-O-phospho-L-serine + ADP + H(+)</text>
        <dbReference type="Rhea" id="RHEA:46600"/>
        <dbReference type="Rhea" id="RHEA-COMP:11602"/>
        <dbReference type="Rhea" id="RHEA-COMP:11603"/>
        <dbReference type="ChEBI" id="CHEBI:15378"/>
        <dbReference type="ChEBI" id="CHEBI:29999"/>
        <dbReference type="ChEBI" id="CHEBI:30616"/>
        <dbReference type="ChEBI" id="CHEBI:83421"/>
        <dbReference type="ChEBI" id="CHEBI:456216"/>
    </reaction>
</comment>
<comment type="catalytic activity">
    <reaction>
        <text>[HPr protein]-O-phospho-L-serine + phosphate + H(+) = [HPr protein]-L-serine + diphosphate</text>
        <dbReference type="Rhea" id="RHEA:46604"/>
        <dbReference type="Rhea" id="RHEA-COMP:11602"/>
        <dbReference type="Rhea" id="RHEA-COMP:11603"/>
        <dbReference type="ChEBI" id="CHEBI:15378"/>
        <dbReference type="ChEBI" id="CHEBI:29999"/>
        <dbReference type="ChEBI" id="CHEBI:33019"/>
        <dbReference type="ChEBI" id="CHEBI:43474"/>
        <dbReference type="ChEBI" id="CHEBI:83421"/>
    </reaction>
</comment>
<comment type="cofactor">
    <cofactor evidence="1">
        <name>Mg(2+)</name>
        <dbReference type="ChEBI" id="CHEBI:18420"/>
    </cofactor>
</comment>
<comment type="activity regulation">
    <text>Contrary to HPrK/P of B.subtilis and other bacteria, that of M.pneumoniae is active as a kinase at very low ATP concentrations in the absence of fructose 1,6-bisphosphate (FBP). Kinase activity is slightly activated by FBP, and inhibited by inorganic phosphate (Pi), but FBP prevents kinase inhibition by Pi. Dephosphorylation of P-Ser-HPr by M.pneumoniae HPrK/P is strictly dependent on the presence of Pi, and is inhibited by FBP. This unique mode of control of HPrK/P activity is proposed to reflect the parasitic lifestyle of M.pneumoniae, that is strictly adapted to its ecological niche on nutrient-rich human mucous membranes.</text>
</comment>
<comment type="subunit">
    <text>Homohexamer, arranged as bilayered trimers.</text>
</comment>
<comment type="domain">
    <text>The Walker A ATP-binding motif also binds Pi and PPi.</text>
</comment>
<comment type="miscellaneous">
    <text>Both phosphorylation and phosphorolysis are carried out by the same active site and suggest a common mechanism for both reactions.</text>
</comment>
<comment type="miscellaneous">
    <text>Contrary to HPrK/P of other bacteria, that of M.pneumoniae has a very high affinity for ATP (Kd=5.3 microM), explaining kinase activity even at low ATP concentrations.</text>
</comment>
<comment type="similarity">
    <text evidence="5">Belongs to the HPrK/P family.</text>
</comment>
<comment type="caution">
    <text evidence="5">Was originally called HPr kinase/phosphatase (PubMed:12368461, PubMed:12589763). But P-Ser-HPr dephosphorylation was shown in several bacteria to follow a quite unique mechanism, in which Pi instead of H(2)O is used for the nucleophilic attack on the phosphoryl group. P-Ser-HPr dephosphorylation is therefore not a phosphohydrolysis but a phospho-phosphorolysis reaction, and the bifunctional enzyme was dubbed HPr kinase/phosphorylase.</text>
</comment>
<proteinExistence type="evidence at protein level"/>
<dbReference type="EC" id="2.7.11.-"/>
<dbReference type="EC" id="2.7.4.-"/>
<dbReference type="EMBL" id="U00089">
    <property type="protein sequence ID" value="AAB96256.1"/>
    <property type="molecule type" value="Genomic_DNA"/>
</dbReference>
<dbReference type="PIR" id="S73934">
    <property type="entry name" value="S73934"/>
</dbReference>
<dbReference type="RefSeq" id="NP_109911.1">
    <property type="nucleotide sequence ID" value="NC_000912.1"/>
</dbReference>
<dbReference type="RefSeq" id="WP_010874580.1">
    <property type="nucleotide sequence ID" value="NZ_OU342337.1"/>
</dbReference>
<dbReference type="PDB" id="1KNX">
    <property type="method" value="X-ray"/>
    <property type="resolution" value="2.50 A"/>
    <property type="chains" value="A/B/C/D/E/F=1-312"/>
</dbReference>
<dbReference type="PDBsum" id="1KNX"/>
<dbReference type="SMR" id="P75548"/>
<dbReference type="IntAct" id="P75548">
    <property type="interactions" value="4"/>
</dbReference>
<dbReference type="STRING" id="272634.MPN_223"/>
<dbReference type="EnsemblBacteria" id="AAB96256">
    <property type="protein sequence ID" value="AAB96256"/>
    <property type="gene ID" value="MPN_223"/>
</dbReference>
<dbReference type="GeneID" id="66609131"/>
<dbReference type="KEGG" id="mpn:MPN_223"/>
<dbReference type="PATRIC" id="fig|272634.6.peg.242"/>
<dbReference type="HOGENOM" id="CLU_052030_0_1_14"/>
<dbReference type="OrthoDB" id="9778803at2"/>
<dbReference type="BioCyc" id="MPNE272634:G1GJ3-358-MONOMER"/>
<dbReference type="EvolutionaryTrace" id="P75548"/>
<dbReference type="Proteomes" id="UP000000808">
    <property type="component" value="Chromosome"/>
</dbReference>
<dbReference type="GO" id="GO:0005524">
    <property type="term" value="F:ATP binding"/>
    <property type="evidence" value="ECO:0007669"/>
    <property type="project" value="UniProtKB-UniRule"/>
</dbReference>
<dbReference type="GO" id="GO:0000287">
    <property type="term" value="F:magnesium ion binding"/>
    <property type="evidence" value="ECO:0007669"/>
    <property type="project" value="UniProtKB-UniRule"/>
</dbReference>
<dbReference type="GO" id="GO:0000155">
    <property type="term" value="F:phosphorelay sensor kinase activity"/>
    <property type="evidence" value="ECO:0007669"/>
    <property type="project" value="InterPro"/>
</dbReference>
<dbReference type="GO" id="GO:0004674">
    <property type="term" value="F:protein serine/threonine kinase activity"/>
    <property type="evidence" value="ECO:0007669"/>
    <property type="project" value="UniProtKB-KW"/>
</dbReference>
<dbReference type="GO" id="GO:0004712">
    <property type="term" value="F:protein serine/threonine/tyrosine kinase activity"/>
    <property type="evidence" value="ECO:0007669"/>
    <property type="project" value="UniProtKB-UniRule"/>
</dbReference>
<dbReference type="GO" id="GO:0006109">
    <property type="term" value="P:regulation of carbohydrate metabolic process"/>
    <property type="evidence" value="ECO:0007669"/>
    <property type="project" value="UniProtKB-UniRule"/>
</dbReference>
<dbReference type="CDD" id="cd01918">
    <property type="entry name" value="HprK_C"/>
    <property type="match status" value="1"/>
</dbReference>
<dbReference type="Gene3D" id="3.40.1390.20">
    <property type="entry name" value="HprK N-terminal domain-like"/>
    <property type="match status" value="1"/>
</dbReference>
<dbReference type="Gene3D" id="3.40.50.300">
    <property type="entry name" value="P-loop containing nucleotide triphosphate hydrolases"/>
    <property type="match status" value="1"/>
</dbReference>
<dbReference type="HAMAP" id="MF_01249">
    <property type="entry name" value="HPr_kinase"/>
    <property type="match status" value="1"/>
</dbReference>
<dbReference type="InterPro" id="IPR003755">
    <property type="entry name" value="HPr(Ser)_kin/Pase"/>
</dbReference>
<dbReference type="InterPro" id="IPR011104">
    <property type="entry name" value="Hpr_kin/Pase_C"/>
</dbReference>
<dbReference type="InterPro" id="IPR011126">
    <property type="entry name" value="Hpr_kin/Pase_Hpr_N"/>
</dbReference>
<dbReference type="InterPro" id="IPR027417">
    <property type="entry name" value="P-loop_NTPase"/>
</dbReference>
<dbReference type="InterPro" id="IPR028979">
    <property type="entry name" value="Ser_kin/Pase_Hpr-like_N_sf"/>
</dbReference>
<dbReference type="NCBIfam" id="TIGR00679">
    <property type="entry name" value="hpr-ser"/>
    <property type="match status" value="1"/>
</dbReference>
<dbReference type="PANTHER" id="PTHR30305:SF1">
    <property type="entry name" value="HPR KINASE_PHOSPHORYLASE"/>
    <property type="match status" value="1"/>
</dbReference>
<dbReference type="PANTHER" id="PTHR30305">
    <property type="entry name" value="PROTEIN YJDM-RELATED"/>
    <property type="match status" value="1"/>
</dbReference>
<dbReference type="Pfam" id="PF07475">
    <property type="entry name" value="Hpr_kinase_C"/>
    <property type="match status" value="1"/>
</dbReference>
<dbReference type="Pfam" id="PF02603">
    <property type="entry name" value="Hpr_kinase_N"/>
    <property type="match status" value="1"/>
</dbReference>
<dbReference type="SUPFAM" id="SSF75138">
    <property type="entry name" value="HprK N-terminal domain-like"/>
    <property type="match status" value="1"/>
</dbReference>
<dbReference type="SUPFAM" id="SSF53795">
    <property type="entry name" value="PEP carboxykinase-like"/>
    <property type="match status" value="1"/>
</dbReference>
<organism>
    <name type="scientific">Mycoplasma pneumoniae (strain ATCC 29342 / M129 / Subtype 1)</name>
    <name type="common">Mycoplasmoides pneumoniae</name>
    <dbReference type="NCBI Taxonomy" id="272634"/>
    <lineage>
        <taxon>Bacteria</taxon>
        <taxon>Bacillati</taxon>
        <taxon>Mycoplasmatota</taxon>
        <taxon>Mycoplasmoidales</taxon>
        <taxon>Mycoplasmoidaceae</taxon>
        <taxon>Mycoplasmoides</taxon>
    </lineage>
</organism>
<reference key="1">
    <citation type="journal article" date="1996" name="Nucleic Acids Res.">
        <title>Complete sequence analysis of the genome of the bacterium Mycoplasma pneumoniae.</title>
        <authorList>
            <person name="Himmelreich R."/>
            <person name="Hilbert H."/>
            <person name="Plagens H."/>
            <person name="Pirkl E."/>
            <person name="Li B.-C."/>
            <person name="Herrmann R."/>
        </authorList>
    </citation>
    <scope>NUCLEOTIDE SEQUENCE [LARGE SCALE GENOMIC DNA]</scope>
    <source>
        <strain>ATCC 29342 / M129 / Subtype 1</strain>
    </source>
</reference>
<reference key="2">
    <citation type="journal article" date="2002" name="Microbiology">
        <title>A novel mode of control of Mycoplasma pneumoniae HPr kinase/phosphatase activity reflects its parasitic lifestyle.</title>
        <authorList>
            <person name="Steinhauer K."/>
            <person name="Jepp T."/>
            <person name="Hillen W."/>
            <person name="Stuelke J."/>
        </authorList>
    </citation>
    <scope>CHARACTERIZATION</scope>
    <scope>MUTAGENESIS OF RESIDUES IN THE WALKER MOTIF A AND IN THE HPRK/P SIGNATURE SEQUENCE</scope>
</reference>
<reference key="3">
    <citation type="journal article" date="2004" name="Eur. J. Biochem.">
        <title>Mycoplasma pneumoniae HPr kinase/phosphorylase.</title>
        <authorList>
            <person name="Merzbacher M."/>
            <person name="Detsch C."/>
            <person name="Hillen W."/>
            <person name="Stuelke J."/>
        </authorList>
    </citation>
    <scope>CHARACTERIZATION</scope>
    <scope>MUTAGENESIS OF GLY-154; GLY-159; LYS-160; SER-161; ARG-204 AND GLY-207</scope>
</reference>
<reference key="4">
    <citation type="journal article" date="2003" name="J. Mol. Biol.">
        <title>Crystal structure of HPr kinase/phosphatase from Mycoplasma pneumoniae.</title>
        <authorList>
            <person name="Allen G.S."/>
            <person name="Steinhauer K."/>
            <person name="Hillen W."/>
            <person name="Stuelke J."/>
            <person name="Brennan R.G."/>
        </authorList>
    </citation>
    <scope>X-RAY CRYSTALLOGRAPHY (2.5 ANGSTROMS)</scope>
</reference>
<sequence length="312" mass="35234">MKKLLVKELIEQFQDCVNLIDGHTNTSNVIRVPGLKRVVFEMLGLFSSQIGSVAILGKREFGFLSQKTLVEQQQILHNLLKLNPPAIILTKSFTDPTVLLQVNQTYQVPILKTDFFSTELSFTVETYINEQFATVAQIHGVLLEVFGVGVLLTGRSGIGKSECALDLINKNHLFVGDDAIEIYRLGNRLFGRAQEVAKKFMEIRGLGIINVERFYGLQITKQRTEIQLMVNLLSLEKQTTVTFERLGTELKKQRLLGVDLSFYEIPISPGRKTSEIIESAVIDFKLKHSGYNSALDFIENQKAILKRKKDES</sequence>
<keyword id="KW-0002">3D-structure</keyword>
<keyword id="KW-0067">ATP-binding</keyword>
<keyword id="KW-0119">Carbohydrate metabolism</keyword>
<keyword id="KW-0418">Kinase</keyword>
<keyword id="KW-0460">Magnesium</keyword>
<keyword id="KW-0479">Metal-binding</keyword>
<keyword id="KW-0511">Multifunctional enzyme</keyword>
<keyword id="KW-0547">Nucleotide-binding</keyword>
<keyword id="KW-1185">Reference proteome</keyword>
<keyword id="KW-0723">Serine/threonine-protein kinase</keyword>
<keyword id="KW-0808">Transferase</keyword>
<name>HPRK_MYCPN</name>
<feature type="chain" id="PRO_0000058973" description="HPr kinase/phosphorylase">
    <location>
        <begin position="1"/>
        <end position="312"/>
    </location>
</feature>
<feature type="region of interest" description="Important for the catalytic mechanism of both phosphorylation and dephosphorylation">
    <location>
        <begin position="201"/>
        <end position="210"/>
    </location>
</feature>
<feature type="region of interest" description="Important for the catalytic mechanism of dephosphorylation" evidence="1">
    <location>
        <begin position="266"/>
        <end position="271"/>
    </location>
</feature>
<feature type="active site" evidence="1">
    <location>
        <position position="139"/>
    </location>
</feature>
<feature type="active site" evidence="1">
    <location>
        <position position="160"/>
    </location>
</feature>
<feature type="active site" description="Proton acceptor; for phosphorylation activity. Proton donor; for dephosphorylation activity" evidence="1">
    <location>
        <position position="178"/>
    </location>
</feature>
<feature type="active site" evidence="1">
    <location>
        <position position="245"/>
    </location>
</feature>
<feature type="binding site" evidence="5">
    <location>
        <begin position="154"/>
        <end position="161"/>
    </location>
    <ligand>
        <name>ATP</name>
        <dbReference type="ChEBI" id="CHEBI:30616"/>
    </ligand>
</feature>
<feature type="binding site" evidence="5">
    <location>
        <position position="161"/>
    </location>
    <ligand>
        <name>Mg(2+)</name>
        <dbReference type="ChEBI" id="CHEBI:18420"/>
    </ligand>
</feature>
<feature type="binding site" evidence="2">
    <location>
        <position position="202"/>
    </location>
    <ligand>
        <name>Mg(2+)</name>
        <dbReference type="ChEBI" id="CHEBI:18420"/>
    </ligand>
</feature>
<feature type="mutagenesis site" description="Kinase activity not affected and 6-fold increase in phosphorylase activity." evidence="3">
    <original>G</original>
    <variation>A</variation>
    <location>
        <position position="140"/>
    </location>
</feature>
<feature type="mutagenesis site" description="4-fold reduction in kinase activity and loss of phosphorylase activity; 8-fold reduction in ATP affinity." evidence="4">
    <original>G</original>
    <variation>A</variation>
    <location>
        <position position="154"/>
    </location>
</feature>
<feature type="mutagenesis site" description="Kinase activity not affected and 4-fold increase in phosphorylase activity." evidence="3">
    <original>S</original>
    <variation>A</variation>
    <location>
        <position position="156"/>
    </location>
</feature>
<feature type="mutagenesis site" description="4-fold reduction in kinase activity and loss of phosphorylase activity." evidence="3">
    <original>S</original>
    <variation>T</variation>
    <location>
        <position position="156"/>
    </location>
</feature>
<feature type="mutagenesis site" description="4-fold reduction in kinase activity and strongly reduced phosphorylase activity." evidence="3">
    <original>G</original>
    <variation>A</variation>
    <location>
        <position position="157"/>
    </location>
</feature>
<feature type="mutagenesis site" description="Loss of both kinase and phosphorylase activities; no ATP binding." evidence="4">
    <original>G</original>
    <variation>A</variation>
    <location>
        <position position="159"/>
    </location>
</feature>
<feature type="mutagenesis site" description="Loss of both kinase and phosphorylase activities; no ATP binding." evidence="4">
    <original>K</original>
    <variation>A</variation>
    <location>
        <position position="160"/>
    </location>
</feature>
<feature type="mutagenesis site" description="Loss of both kinase and phosphorylase activities." evidence="4">
    <original>K</original>
    <variation>R</variation>
    <location>
        <position position="160"/>
    </location>
</feature>
<feature type="mutagenesis site" description="10-fold reduction in kinase activity and loss of phosphorylase activity; affinity for ATP is only slightly affected." evidence="4">
    <original>S</original>
    <variation>A</variation>
    <location>
        <position position="161"/>
    </location>
</feature>
<feature type="mutagenesis site" description="2-fold reduction in kinase activity and strongly reduced phosphorylase activity; binds ATP with high affinity." evidence="4">
    <original>S</original>
    <variation>T</variation>
    <location>
        <position position="161"/>
    </location>
</feature>
<feature type="mutagenesis site" description="Kinase activity not affected and loss of phosphorylase activity." evidence="3">
    <original>E</original>
    <variation>D</variation>
    <location>
        <position position="162"/>
    </location>
</feature>
<feature type="mutagenesis site" description="Kinase activity not affected and strongly reduced phosphorylase activity; ATP binding not affected." evidence="4">
    <original>R</original>
    <variation>K</variation>
    <location>
        <position position="204"/>
    </location>
</feature>
<feature type="mutagenesis site" description="Loss of both kinase and phosphorylase activities; ATP binding not affected." evidence="4">
    <original>G</original>
    <variation>A</variation>
    <location>
        <position position="207"/>
    </location>
</feature>
<feature type="helix" evidence="6">
    <location>
        <begin position="6"/>
        <end position="10"/>
    </location>
</feature>
<feature type="turn" evidence="6">
    <location>
        <begin position="14"/>
        <end position="16"/>
    </location>
</feature>
<feature type="helix" evidence="6">
    <location>
        <begin position="39"/>
        <end position="42"/>
    </location>
</feature>
<feature type="strand" evidence="6">
    <location>
        <begin position="54"/>
        <end position="56"/>
    </location>
</feature>
<feature type="helix" evidence="6">
    <location>
        <begin position="58"/>
        <end position="64"/>
    </location>
</feature>
<feature type="helix" evidence="6">
    <location>
        <begin position="69"/>
        <end position="72"/>
    </location>
</feature>
<feature type="turn" evidence="6">
    <location>
        <begin position="73"/>
        <end position="75"/>
    </location>
</feature>
<feature type="helix" evidence="6">
    <location>
        <begin position="76"/>
        <end position="80"/>
    </location>
</feature>
<feature type="strand" evidence="6">
    <location>
        <begin position="87"/>
        <end position="90"/>
    </location>
</feature>
<feature type="turn" evidence="6">
    <location>
        <begin position="91"/>
        <end position="93"/>
    </location>
</feature>
<feature type="helix" evidence="6">
    <location>
        <begin position="97"/>
        <end position="102"/>
    </location>
</feature>
<feature type="helix" evidence="6">
    <location>
        <begin position="103"/>
        <end position="105"/>
    </location>
</feature>
<feature type="strand" evidence="6">
    <location>
        <begin position="110"/>
        <end position="115"/>
    </location>
</feature>
<feature type="helix" evidence="6">
    <location>
        <begin position="117"/>
        <end position="120"/>
    </location>
</feature>
<feature type="turn" evidence="6">
    <location>
        <begin position="121"/>
        <end position="123"/>
    </location>
</feature>
<feature type="helix" evidence="6">
    <location>
        <begin position="124"/>
        <end position="131"/>
    </location>
</feature>
<feature type="strand" evidence="6">
    <location>
        <begin position="136"/>
        <end position="145"/>
    </location>
</feature>
<feature type="strand" evidence="6">
    <location>
        <begin position="148"/>
        <end position="159"/>
    </location>
</feature>
<feature type="helix" evidence="6">
    <location>
        <begin position="160"/>
        <end position="168"/>
    </location>
</feature>
<feature type="turn" evidence="6">
    <location>
        <begin position="169"/>
        <end position="171"/>
    </location>
</feature>
<feature type="strand" evidence="6">
    <location>
        <begin position="173"/>
        <end position="185"/>
    </location>
</feature>
<feature type="strand" evidence="6">
    <location>
        <begin position="188"/>
        <end position="193"/>
    </location>
</feature>
<feature type="turn" evidence="6">
    <location>
        <begin position="195"/>
        <end position="199"/>
    </location>
</feature>
<feature type="strand" evidence="6">
    <location>
        <begin position="200"/>
        <end position="203"/>
    </location>
</feature>
<feature type="turn" evidence="6">
    <location>
        <begin position="204"/>
        <end position="206"/>
    </location>
</feature>
<feature type="strand" evidence="6">
    <location>
        <begin position="207"/>
        <end position="210"/>
    </location>
</feature>
<feature type="helix" evidence="6">
    <location>
        <begin position="211"/>
        <end position="215"/>
    </location>
</feature>
<feature type="helix" evidence="6">
    <location>
        <begin position="217"/>
        <end position="219"/>
    </location>
</feature>
<feature type="strand" evidence="6">
    <location>
        <begin position="224"/>
        <end position="233"/>
    </location>
</feature>
<feature type="strand" evidence="6">
    <location>
        <begin position="252"/>
        <end position="255"/>
    </location>
</feature>
<feature type="strand" evidence="6">
    <location>
        <begin position="258"/>
        <end position="266"/>
    </location>
</feature>
<feature type="helix" evidence="6">
    <location>
        <begin position="273"/>
        <end position="288"/>
    </location>
</feature>
<feature type="helix" evidence="6">
    <location>
        <begin position="293"/>
        <end position="304"/>
    </location>
</feature>
<feature type="helix" evidence="6">
    <location>
        <begin position="305"/>
        <end position="308"/>
    </location>
</feature>
<accession>P75548</accession>